<protein>
    <recommendedName>
        <fullName evidence="1">Glutamate-1-semialdehyde 2,1-aminomutase</fullName>
        <shortName evidence="1">GSA</shortName>
        <ecNumber evidence="1">5.4.3.8</ecNumber>
    </recommendedName>
    <alternativeName>
        <fullName evidence="1">Glutamate-1-semialdehyde aminotransferase</fullName>
        <shortName evidence="1">GSA-AT</shortName>
    </alternativeName>
</protein>
<evidence type="ECO:0000255" key="1">
    <source>
        <dbReference type="HAMAP-Rule" id="MF_00375"/>
    </source>
</evidence>
<keyword id="KW-0963">Cytoplasm</keyword>
<keyword id="KW-0413">Isomerase</keyword>
<keyword id="KW-0627">Porphyrin biosynthesis</keyword>
<keyword id="KW-0663">Pyridoxal phosphate</keyword>
<keyword id="KW-1185">Reference proteome</keyword>
<organism>
    <name type="scientific">Paraburkholderia phymatum (strain DSM 17167 / CIP 108236 / LMG 21445 / STM815)</name>
    <name type="common">Burkholderia phymatum</name>
    <dbReference type="NCBI Taxonomy" id="391038"/>
    <lineage>
        <taxon>Bacteria</taxon>
        <taxon>Pseudomonadati</taxon>
        <taxon>Pseudomonadota</taxon>
        <taxon>Betaproteobacteria</taxon>
        <taxon>Burkholderiales</taxon>
        <taxon>Burkholderiaceae</taxon>
        <taxon>Paraburkholderia</taxon>
    </lineage>
</organism>
<accession>B2JED5</accession>
<dbReference type="EC" id="5.4.3.8" evidence="1"/>
<dbReference type="EMBL" id="CP001043">
    <property type="protein sequence ID" value="ACC69812.1"/>
    <property type="molecule type" value="Genomic_DNA"/>
</dbReference>
<dbReference type="RefSeq" id="WP_012400033.1">
    <property type="nucleotide sequence ID" value="NC_010622.1"/>
</dbReference>
<dbReference type="SMR" id="B2JED5"/>
<dbReference type="STRING" id="391038.Bphy_0622"/>
<dbReference type="KEGG" id="bph:Bphy_0622"/>
<dbReference type="eggNOG" id="COG0001">
    <property type="taxonomic scope" value="Bacteria"/>
</dbReference>
<dbReference type="HOGENOM" id="CLU_016922_1_5_4"/>
<dbReference type="OrthoDB" id="3398487at2"/>
<dbReference type="UniPathway" id="UPA00251">
    <property type="reaction ID" value="UER00317"/>
</dbReference>
<dbReference type="Proteomes" id="UP000001192">
    <property type="component" value="Chromosome 1"/>
</dbReference>
<dbReference type="GO" id="GO:0005737">
    <property type="term" value="C:cytoplasm"/>
    <property type="evidence" value="ECO:0007669"/>
    <property type="project" value="UniProtKB-SubCell"/>
</dbReference>
<dbReference type="GO" id="GO:0042286">
    <property type="term" value="F:glutamate-1-semialdehyde 2,1-aminomutase activity"/>
    <property type="evidence" value="ECO:0007669"/>
    <property type="project" value="UniProtKB-UniRule"/>
</dbReference>
<dbReference type="GO" id="GO:0030170">
    <property type="term" value="F:pyridoxal phosphate binding"/>
    <property type="evidence" value="ECO:0007669"/>
    <property type="project" value="InterPro"/>
</dbReference>
<dbReference type="GO" id="GO:0008483">
    <property type="term" value="F:transaminase activity"/>
    <property type="evidence" value="ECO:0007669"/>
    <property type="project" value="InterPro"/>
</dbReference>
<dbReference type="GO" id="GO:0006782">
    <property type="term" value="P:protoporphyrinogen IX biosynthetic process"/>
    <property type="evidence" value="ECO:0007669"/>
    <property type="project" value="UniProtKB-UniRule"/>
</dbReference>
<dbReference type="CDD" id="cd00610">
    <property type="entry name" value="OAT_like"/>
    <property type="match status" value="1"/>
</dbReference>
<dbReference type="FunFam" id="3.40.640.10:FF:000021">
    <property type="entry name" value="Glutamate-1-semialdehyde 2,1-aminomutase"/>
    <property type="match status" value="1"/>
</dbReference>
<dbReference type="Gene3D" id="3.90.1150.10">
    <property type="entry name" value="Aspartate Aminotransferase, domain 1"/>
    <property type="match status" value="1"/>
</dbReference>
<dbReference type="Gene3D" id="3.40.640.10">
    <property type="entry name" value="Type I PLP-dependent aspartate aminotransferase-like (Major domain)"/>
    <property type="match status" value="1"/>
</dbReference>
<dbReference type="HAMAP" id="MF_00375">
    <property type="entry name" value="HemL_aminotrans_3"/>
    <property type="match status" value="1"/>
</dbReference>
<dbReference type="InterPro" id="IPR004639">
    <property type="entry name" value="4pyrrol_synth_GluAld_NH2Trfase"/>
</dbReference>
<dbReference type="InterPro" id="IPR005814">
    <property type="entry name" value="Aminotrans_3"/>
</dbReference>
<dbReference type="InterPro" id="IPR049704">
    <property type="entry name" value="Aminotrans_3_PPA_site"/>
</dbReference>
<dbReference type="InterPro" id="IPR015424">
    <property type="entry name" value="PyrdxlP-dep_Trfase"/>
</dbReference>
<dbReference type="InterPro" id="IPR015421">
    <property type="entry name" value="PyrdxlP-dep_Trfase_major"/>
</dbReference>
<dbReference type="InterPro" id="IPR015422">
    <property type="entry name" value="PyrdxlP-dep_Trfase_small"/>
</dbReference>
<dbReference type="NCBIfam" id="TIGR00713">
    <property type="entry name" value="hemL"/>
    <property type="match status" value="1"/>
</dbReference>
<dbReference type="NCBIfam" id="NF000818">
    <property type="entry name" value="PRK00062.1"/>
    <property type="match status" value="1"/>
</dbReference>
<dbReference type="PANTHER" id="PTHR43713">
    <property type="entry name" value="GLUTAMATE-1-SEMIALDEHYDE 2,1-AMINOMUTASE"/>
    <property type="match status" value="1"/>
</dbReference>
<dbReference type="PANTHER" id="PTHR43713:SF3">
    <property type="entry name" value="GLUTAMATE-1-SEMIALDEHYDE 2,1-AMINOMUTASE 1, CHLOROPLASTIC-RELATED"/>
    <property type="match status" value="1"/>
</dbReference>
<dbReference type="Pfam" id="PF00202">
    <property type="entry name" value="Aminotran_3"/>
    <property type="match status" value="1"/>
</dbReference>
<dbReference type="SUPFAM" id="SSF53383">
    <property type="entry name" value="PLP-dependent transferases"/>
    <property type="match status" value="1"/>
</dbReference>
<dbReference type="PROSITE" id="PS00600">
    <property type="entry name" value="AA_TRANSFER_CLASS_3"/>
    <property type="match status" value="1"/>
</dbReference>
<name>GSA_PARP8</name>
<sequence length="426" mass="45499">MPSNQELFERAQKTIPGGVNSPVRAFRSVGGTPRFIERAQGAYFWDAEGKRYIDYIGSWGPMIVGHVHPEVLEAVQRVLSKGFSFGAPTEAEIEIAEEICKLVPSMEQVRMVSSGTEATMSALRLARGFTDRSRIVKFEGCYHGHADSLLVKAGSGLLTFGNPTSAGVPVDIAKHTTVLEYNNVAALEEAFSAFGNEIASVIVEPVAGNMNLVRATPEFLGALRRLCSEYGSVLIFDEVMCGFRVALGGAQQLYGIRPDLTCLGKVIGGGMPAAAFGGRRDIMAHLAPLGGVYQAGTLSGNPIAVAAGLKTLQLIQAPGFYDALSRRTTRLVQDLTEAAREAKIPFTADSVGGMFGLYFSESVPASFAEISRCDVPRFNAFFHKMLDAGVYFAPSAYEAGFVSSAHDDATVEATIEAARGAFKSLA</sequence>
<reference key="1">
    <citation type="journal article" date="2014" name="Stand. Genomic Sci.">
        <title>Complete genome sequence of Burkholderia phymatum STM815(T), a broad host range and efficient nitrogen-fixing symbiont of Mimosa species.</title>
        <authorList>
            <person name="Moulin L."/>
            <person name="Klonowska A."/>
            <person name="Caroline B."/>
            <person name="Booth K."/>
            <person name="Vriezen J.A."/>
            <person name="Melkonian R."/>
            <person name="James E.K."/>
            <person name="Young J.P."/>
            <person name="Bena G."/>
            <person name="Hauser L."/>
            <person name="Land M."/>
            <person name="Kyrpides N."/>
            <person name="Bruce D."/>
            <person name="Chain P."/>
            <person name="Copeland A."/>
            <person name="Pitluck S."/>
            <person name="Woyke T."/>
            <person name="Lizotte-Waniewski M."/>
            <person name="Bristow J."/>
            <person name="Riley M."/>
        </authorList>
    </citation>
    <scope>NUCLEOTIDE SEQUENCE [LARGE SCALE GENOMIC DNA]</scope>
    <source>
        <strain>DSM 17167 / CIP 108236 / LMG 21445 / STM815</strain>
    </source>
</reference>
<proteinExistence type="inferred from homology"/>
<comment type="catalytic activity">
    <reaction evidence="1">
        <text>(S)-4-amino-5-oxopentanoate = 5-aminolevulinate</text>
        <dbReference type="Rhea" id="RHEA:14265"/>
        <dbReference type="ChEBI" id="CHEBI:57501"/>
        <dbReference type="ChEBI" id="CHEBI:356416"/>
        <dbReference type="EC" id="5.4.3.8"/>
    </reaction>
</comment>
<comment type="cofactor">
    <cofactor evidence="1">
        <name>pyridoxal 5'-phosphate</name>
        <dbReference type="ChEBI" id="CHEBI:597326"/>
    </cofactor>
</comment>
<comment type="pathway">
    <text evidence="1">Porphyrin-containing compound metabolism; protoporphyrin-IX biosynthesis; 5-aminolevulinate from L-glutamyl-tRNA(Glu): step 2/2.</text>
</comment>
<comment type="subunit">
    <text evidence="1">Homodimer.</text>
</comment>
<comment type="subcellular location">
    <subcellularLocation>
        <location evidence="1">Cytoplasm</location>
    </subcellularLocation>
</comment>
<comment type="similarity">
    <text evidence="1">Belongs to the class-III pyridoxal-phosphate-dependent aminotransferase family. HemL subfamily.</text>
</comment>
<feature type="chain" id="PRO_1000121862" description="Glutamate-1-semialdehyde 2,1-aminomutase">
    <location>
        <begin position="1"/>
        <end position="426"/>
    </location>
</feature>
<feature type="modified residue" description="N6-(pyridoxal phosphate)lysine" evidence="1">
    <location>
        <position position="265"/>
    </location>
</feature>
<gene>
    <name evidence="1" type="primary">hemL</name>
    <name type="ordered locus">Bphy_0622</name>
</gene>